<proteinExistence type="evidence at protein level"/>
<keyword id="KW-0927">Auxin signaling pathway</keyword>
<keyword id="KW-0217">Developmental protein</keyword>
<keyword id="KW-0433">Leucine-rich repeat</keyword>
<keyword id="KW-0539">Nucleus</keyword>
<keyword id="KW-1185">Reference proteome</keyword>
<keyword id="KW-0677">Repeat</keyword>
<keyword id="KW-0833">Ubl conjugation pathway</keyword>
<protein>
    <recommendedName>
        <fullName evidence="16">F-box protein MAX2</fullName>
    </recommendedName>
    <alternativeName>
        <fullName evidence="14">F-box/LRR-repeat protein 7</fullName>
    </alternativeName>
    <alternativeName>
        <fullName evidence="17">Protein KARRIKIN INSENSITIVE 1</fullName>
    </alternativeName>
    <alternativeName>
        <fullName evidence="16">Protein MORE AXILLARY BRANCHING 2</fullName>
    </alternativeName>
    <alternativeName>
        <fullName evidence="15">Protein ORESARA 9</fullName>
    </alternativeName>
</protein>
<evidence type="ECO:0000255" key="1">
    <source>
        <dbReference type="PROSITE-ProRule" id="PRU00080"/>
    </source>
</evidence>
<evidence type="ECO:0000256" key="2">
    <source>
        <dbReference type="SAM" id="MobiDB-lite"/>
    </source>
</evidence>
<evidence type="ECO:0000269" key="3">
    <source>
    </source>
</evidence>
<evidence type="ECO:0000269" key="4">
    <source>
    </source>
</evidence>
<evidence type="ECO:0000269" key="5">
    <source>
    </source>
</evidence>
<evidence type="ECO:0000269" key="6">
    <source>
    </source>
</evidence>
<evidence type="ECO:0000269" key="7">
    <source>
    </source>
</evidence>
<evidence type="ECO:0000269" key="8">
    <source>
    </source>
</evidence>
<evidence type="ECO:0000269" key="9">
    <source>
    </source>
</evidence>
<evidence type="ECO:0000269" key="10">
    <source>
    </source>
</evidence>
<evidence type="ECO:0000269" key="11">
    <source>
    </source>
</evidence>
<evidence type="ECO:0000269" key="12">
    <source>
    </source>
</evidence>
<evidence type="ECO:0000269" key="13">
    <source>
    </source>
</evidence>
<evidence type="ECO:0000303" key="14">
    <source>
    </source>
</evidence>
<evidence type="ECO:0000303" key="15">
    <source>
    </source>
</evidence>
<evidence type="ECO:0000303" key="16">
    <source>
    </source>
</evidence>
<evidence type="ECO:0000305" key="17"/>
<evidence type="ECO:0000305" key="18">
    <source>
    </source>
</evidence>
<evidence type="ECO:0000312" key="19">
    <source>
        <dbReference type="Araport" id="AT2G42620"/>
    </source>
</evidence>
<evidence type="ECO:0000312" key="20">
    <source>
        <dbReference type="EMBL" id="AAD22992.2"/>
    </source>
</evidence>
<gene>
    <name evidence="16" type="primary">MAX2</name>
    <name evidence="14" type="synonym">FBL7</name>
    <name evidence="17" type="synonym">KAI1</name>
    <name evidence="15" type="synonym">ORE9</name>
    <name evidence="19" type="ordered locus">At2g42620</name>
    <name evidence="20" type="ORF">F14N22.11</name>
</gene>
<comment type="function">
    <text evidence="3 4 5 6 7 8 9 12 13">Component of SCF(ASK-cullin-F-box) E3 ubiquitin ligase complexes, which may mediate the ubiquitination and subsequent proteasomal degradation of target proteins. Promotes the senescence. Is necessary for responses to strigolactones and karrikins. Contributes to the selective repression of axillary shoots and moderates the branching by regulating negatively the auxin transport in primary stems, in an AXR1-independent manner (PubMed:11487692, PubMed:11874909, PubMed:15737939, PubMed:16546078, PubMed:22357928, PubMed:30865619, PubMed:9351240). Required for the progression of leaf senescence mediated by methyl jasmonate (PubMed:26507893). Required at each node to suppress axillary bud growth (PubMed:17346265, PubMed:30865619).</text>
</comment>
<comment type="pathway">
    <text>Protein modification; protein ubiquitination.</text>
</comment>
<comment type="subunit">
    <text evidence="3 7 10 11">Part of a SCF (SKP1-cullin-F-box) protein ligase complex (PubMed:11487692, PubMed:17346265). Interacts with SKP1A/ASK1 (PubMed:11487692, PubMed:17346265). Interacts with CUL1 (PubMed:17346265). Interacts with SMXL6, SMXL7 and SMXL8 (PubMed:26546446). Interacts with D14. Forms a complex with D14 and SKP1A/ASK1 in presence of strigolactone (PubMed:27479325).</text>
</comment>
<comment type="interaction">
    <interactant intactId="EBI-25529872">
        <id>Q9SIM9</id>
    </interactant>
    <interactant intactId="EBI-604085">
        <id>Q9LNT9</id>
        <label>ASK4</label>
    </interactant>
    <organismsDiffer>false</organismsDiffer>
    <experiments>3</experiments>
</comment>
<comment type="interaction">
    <interactant intactId="EBI-25529872">
        <id>Q9SIM9</id>
    </interactant>
    <interactant intactId="EBI-25529942">
        <id>Q8GY60</id>
        <label>At4g03415</label>
    </interactant>
    <organismsDiffer>false</organismsDiffer>
    <experiments>3</experiments>
</comment>
<comment type="interaction">
    <interactant intactId="EBI-25529872">
        <id>Q9SIM9</id>
    </interactant>
    <interactant intactId="EBI-1238561">
        <id>O82754</id>
        <label>At4g23050</label>
    </interactant>
    <organismsDiffer>false</organismsDiffer>
    <experiments>3</experiments>
</comment>
<comment type="interaction">
    <interactant intactId="EBI-25529872">
        <id>Q9SIM9</id>
    </interactant>
    <interactant intactId="EBI-25529973">
        <id>A0A178V0W2</id>
        <label>At4g26660</label>
    </interactant>
    <organismsDiffer>false</organismsDiffer>
    <experiments>3</experiments>
</comment>
<comment type="interaction">
    <interactant intactId="EBI-25529872">
        <id>Q9SIM9</id>
    </interactant>
    <interactant intactId="EBI-532357">
        <id>Q39255</id>
        <label>SKP1A</label>
    </interactant>
    <organismsDiffer>false</organismsDiffer>
    <experiments>3</experiments>
</comment>
<comment type="interaction">
    <interactant intactId="EBI-25529872">
        <id>Q9SIM9</id>
    </interactant>
    <interactant intactId="EBI-604076">
        <id>Q9FHW7</id>
        <label>SKP1B</label>
    </interactant>
    <organismsDiffer>false</organismsDiffer>
    <experiments>3</experiments>
</comment>
<comment type="interaction">
    <interactant intactId="EBI-25529872">
        <id>Q9SIM9</id>
    </interactant>
    <interactant intactId="EBI-25529919">
        <id>Q9SP35</id>
        <label>TIM17-2</label>
    </interactant>
    <organismsDiffer>false</organismsDiffer>
    <experiments>3</experiments>
</comment>
<comment type="subcellular location">
    <subcellularLocation>
        <location evidence="7">Nucleus</location>
    </subcellularLocation>
</comment>
<comment type="tissue specificity">
    <text evidence="7">Expressed in the vasculature of growing leaves and roots, rosette axillary bud, flowers, siliques, funiculi and stems.</text>
</comment>
<comment type="induction">
    <text evidence="9">Up-regulated upon binding of EIN3 to the promoter during methyl jasmonate-induced leaf senescence.</text>
</comment>
<comment type="domain">
    <text evidence="3 7">The F-box domain (1-55) is required for activity of the protein and for the interaction with SKP1A/ASK1.</text>
</comment>
<comment type="disruption phenotype">
    <text evidence="12">Increased shoot branching.</text>
</comment>
<comment type="miscellaneous">
    <text evidence="18">'Oresara' means 'long living' in Korean.</text>
</comment>
<organism>
    <name type="scientific">Arabidopsis thaliana</name>
    <name type="common">Mouse-ear cress</name>
    <dbReference type="NCBI Taxonomy" id="3702"/>
    <lineage>
        <taxon>Eukaryota</taxon>
        <taxon>Viridiplantae</taxon>
        <taxon>Streptophyta</taxon>
        <taxon>Embryophyta</taxon>
        <taxon>Tracheophyta</taxon>
        <taxon>Spermatophyta</taxon>
        <taxon>Magnoliopsida</taxon>
        <taxon>eudicotyledons</taxon>
        <taxon>Gunneridae</taxon>
        <taxon>Pentapetalae</taxon>
        <taxon>rosids</taxon>
        <taxon>malvids</taxon>
        <taxon>Brassicales</taxon>
        <taxon>Brassicaceae</taxon>
        <taxon>Camelineae</taxon>
        <taxon>Arabidopsis</taxon>
    </lineage>
</organism>
<accession>Q9SIM9</accession>
<accession>Q947K3</accession>
<dbReference type="EMBL" id="AF305597">
    <property type="protein sequence ID" value="AAK97303.1"/>
    <property type="molecule type" value="mRNA"/>
</dbReference>
<dbReference type="EMBL" id="AC007087">
    <property type="protein sequence ID" value="AAD22992.2"/>
    <property type="molecule type" value="Genomic_DNA"/>
</dbReference>
<dbReference type="EMBL" id="CP002685">
    <property type="protein sequence ID" value="AEC10149.1"/>
    <property type="molecule type" value="Genomic_DNA"/>
</dbReference>
<dbReference type="PIR" id="B84856">
    <property type="entry name" value="B84856"/>
</dbReference>
<dbReference type="RefSeq" id="NP_565979.1">
    <property type="nucleotide sequence ID" value="NM_129823.3"/>
</dbReference>
<dbReference type="SMR" id="Q9SIM9"/>
<dbReference type="BioGRID" id="4199">
    <property type="interactions" value="14"/>
</dbReference>
<dbReference type="FunCoup" id="Q9SIM9">
    <property type="interactions" value="948"/>
</dbReference>
<dbReference type="IntAct" id="Q9SIM9">
    <property type="interactions" value="7"/>
</dbReference>
<dbReference type="STRING" id="3702.Q9SIM9"/>
<dbReference type="iPTMnet" id="Q9SIM9"/>
<dbReference type="PaxDb" id="3702-AT2G42620.1"/>
<dbReference type="ProteomicsDB" id="238886"/>
<dbReference type="EnsemblPlants" id="AT2G42620.1">
    <property type="protein sequence ID" value="AT2G42620.1"/>
    <property type="gene ID" value="AT2G42620"/>
</dbReference>
<dbReference type="GeneID" id="818862"/>
<dbReference type="Gramene" id="AT2G42620.1">
    <property type="protein sequence ID" value="AT2G42620.1"/>
    <property type="gene ID" value="AT2G42620"/>
</dbReference>
<dbReference type="KEGG" id="ath:AT2G42620"/>
<dbReference type="Araport" id="AT2G42620"/>
<dbReference type="TAIR" id="AT2G42620">
    <property type="gene designation" value="MAX2"/>
</dbReference>
<dbReference type="eggNOG" id="ENOG502QS13">
    <property type="taxonomic scope" value="Eukaryota"/>
</dbReference>
<dbReference type="HOGENOM" id="CLU_024476_0_0_1"/>
<dbReference type="InParanoid" id="Q9SIM9"/>
<dbReference type="OMA" id="IACMFDP"/>
<dbReference type="PhylomeDB" id="Q9SIM9"/>
<dbReference type="UniPathway" id="UPA00143"/>
<dbReference type="PRO" id="PR:Q9SIM9"/>
<dbReference type="Proteomes" id="UP000006548">
    <property type="component" value="Chromosome 2"/>
</dbReference>
<dbReference type="ExpressionAtlas" id="Q9SIM9">
    <property type="expression patterns" value="baseline and differential"/>
</dbReference>
<dbReference type="GO" id="GO:0005634">
    <property type="term" value="C:nucleus"/>
    <property type="evidence" value="ECO:0000314"/>
    <property type="project" value="TAIR"/>
</dbReference>
<dbReference type="GO" id="GO:0019005">
    <property type="term" value="C:SCF ubiquitin ligase complex"/>
    <property type="evidence" value="ECO:0000250"/>
    <property type="project" value="TAIR"/>
</dbReference>
<dbReference type="GO" id="GO:0009926">
    <property type="term" value="P:auxin polar transport"/>
    <property type="evidence" value="ECO:0000315"/>
    <property type="project" value="TAIR"/>
</dbReference>
<dbReference type="GO" id="GO:0009734">
    <property type="term" value="P:auxin-activated signaling pathway"/>
    <property type="evidence" value="ECO:0007669"/>
    <property type="project" value="UniProtKB-KW"/>
</dbReference>
<dbReference type="GO" id="GO:0061137">
    <property type="term" value="P:bud dilation"/>
    <property type="evidence" value="ECO:0007669"/>
    <property type="project" value="EnsemblPlants"/>
</dbReference>
<dbReference type="GO" id="GO:0042335">
    <property type="term" value="P:cuticle development"/>
    <property type="evidence" value="ECO:0000315"/>
    <property type="project" value="TAIR"/>
</dbReference>
<dbReference type="GO" id="GO:0010187">
    <property type="term" value="P:negative regulation of seed germination"/>
    <property type="evidence" value="ECO:0000315"/>
    <property type="project" value="TAIR"/>
</dbReference>
<dbReference type="GO" id="GO:1902584">
    <property type="term" value="P:positive regulation of response to water deprivation"/>
    <property type="evidence" value="ECO:0000315"/>
    <property type="project" value="TAIR"/>
</dbReference>
<dbReference type="GO" id="GO:0016567">
    <property type="term" value="P:protein ubiquitination"/>
    <property type="evidence" value="ECO:0000304"/>
    <property type="project" value="TAIR"/>
</dbReference>
<dbReference type="GO" id="GO:0009934">
    <property type="term" value="P:regulation of meristem structural organization"/>
    <property type="evidence" value="ECO:0000315"/>
    <property type="project" value="TAIR"/>
</dbReference>
<dbReference type="GO" id="GO:1900618">
    <property type="term" value="P:regulation of shoot system morphogenesis"/>
    <property type="evidence" value="ECO:0007669"/>
    <property type="project" value="EnsemblPlants"/>
</dbReference>
<dbReference type="GO" id="GO:0009416">
    <property type="term" value="P:response to light stimulus"/>
    <property type="evidence" value="ECO:0000315"/>
    <property type="project" value="TAIR"/>
</dbReference>
<dbReference type="GO" id="GO:0009414">
    <property type="term" value="P:response to water deprivation"/>
    <property type="evidence" value="ECO:0000316"/>
    <property type="project" value="TAIR"/>
</dbReference>
<dbReference type="GO" id="GO:0031146">
    <property type="term" value="P:SCF-dependent proteasomal ubiquitin-dependent protein catabolic process"/>
    <property type="evidence" value="ECO:0007669"/>
    <property type="project" value="EnsemblPlants"/>
</dbReference>
<dbReference type="GO" id="GO:0010016">
    <property type="term" value="P:shoot system morphogenesis"/>
    <property type="evidence" value="ECO:0000315"/>
    <property type="project" value="TAIR"/>
</dbReference>
<dbReference type="CDD" id="cd22159">
    <property type="entry name" value="F-box_AtTIR1-like"/>
    <property type="match status" value="1"/>
</dbReference>
<dbReference type="FunFam" id="3.80.10.10:FF:000712">
    <property type="entry name" value="F-box/LRR-repeat MAX2 homolog"/>
    <property type="match status" value="1"/>
</dbReference>
<dbReference type="Gene3D" id="3.80.10.10">
    <property type="entry name" value="Ribonuclease Inhibitor"/>
    <property type="match status" value="1"/>
</dbReference>
<dbReference type="InterPro" id="IPR041567">
    <property type="entry name" value="COI1_F-box"/>
</dbReference>
<dbReference type="InterPro" id="IPR006553">
    <property type="entry name" value="Leu-rich_rpt_Cys-con_subtyp"/>
</dbReference>
<dbReference type="InterPro" id="IPR032675">
    <property type="entry name" value="LRR_dom_sf"/>
</dbReference>
<dbReference type="PANTHER" id="PTHR13318:SF148">
    <property type="entry name" value="F-BOX PROTEIN MAX2"/>
    <property type="match status" value="1"/>
</dbReference>
<dbReference type="PANTHER" id="PTHR13318">
    <property type="entry name" value="PARTNER OF PAIRED, ISOFORM B-RELATED"/>
    <property type="match status" value="1"/>
</dbReference>
<dbReference type="Pfam" id="PF18511">
    <property type="entry name" value="F-box_5"/>
    <property type="match status" value="1"/>
</dbReference>
<dbReference type="SMART" id="SM00367">
    <property type="entry name" value="LRR_CC"/>
    <property type="match status" value="3"/>
</dbReference>
<dbReference type="SUPFAM" id="SSF52047">
    <property type="entry name" value="RNI-like"/>
    <property type="match status" value="1"/>
</dbReference>
<feature type="chain" id="PRO_0000272266" description="F-box protein MAX2">
    <location>
        <begin position="1"/>
        <end position="693"/>
    </location>
</feature>
<feature type="domain" description="F-box" evidence="1">
    <location>
        <begin position="3"/>
        <end position="50"/>
    </location>
</feature>
<feature type="repeat" description="LRR 1" evidence="3">
    <location>
        <begin position="9"/>
        <end position="34"/>
    </location>
</feature>
<feature type="repeat" description="LRR 2" evidence="3">
    <location>
        <begin position="49"/>
        <end position="74"/>
    </location>
</feature>
<feature type="repeat" description="LRR 3" evidence="3">
    <location>
        <begin position="75"/>
        <end position="100"/>
    </location>
</feature>
<feature type="repeat" description="LRR 4" evidence="3">
    <location>
        <begin position="110"/>
        <end position="135"/>
    </location>
</feature>
<feature type="repeat" description="LRR 5" evidence="3">
    <location>
        <begin position="141"/>
        <end position="167"/>
    </location>
</feature>
<feature type="repeat" description="LRR 6" evidence="3">
    <location>
        <begin position="168"/>
        <end position="196"/>
    </location>
</feature>
<feature type="repeat" description="LRR 7" evidence="3">
    <location>
        <begin position="200"/>
        <end position="225"/>
    </location>
</feature>
<feature type="repeat" description="LRR 8" evidence="3">
    <location>
        <begin position="232"/>
        <end position="257"/>
    </location>
</feature>
<feature type="repeat" description="LRR 9" evidence="3">
    <location>
        <begin position="274"/>
        <end position="299"/>
    </location>
</feature>
<feature type="repeat" description="LRR 10" evidence="3">
    <location>
        <begin position="302"/>
        <end position="327"/>
    </location>
</feature>
<feature type="repeat" description="LRR 11" evidence="3">
    <location>
        <begin position="332"/>
        <end position="356"/>
    </location>
</feature>
<feature type="repeat" description="LRR 12" evidence="3">
    <location>
        <begin position="357"/>
        <end position="382"/>
    </location>
</feature>
<feature type="repeat" description="LRR 13" evidence="3">
    <location>
        <begin position="383"/>
        <end position="409"/>
    </location>
</feature>
<feature type="repeat" description="LRR 14" evidence="3">
    <location>
        <begin position="410"/>
        <end position="436"/>
    </location>
</feature>
<feature type="repeat" description="LRR 15" evidence="3">
    <location>
        <begin position="480"/>
        <end position="505"/>
    </location>
</feature>
<feature type="repeat" description="LRR 16" evidence="3">
    <location>
        <begin position="508"/>
        <end position="532"/>
    </location>
</feature>
<feature type="repeat" description="LRR 17" evidence="3">
    <location>
        <begin position="541"/>
        <end position="565"/>
    </location>
</feature>
<feature type="repeat" description="LRR 18" evidence="3">
    <location>
        <begin position="608"/>
        <end position="637"/>
    </location>
</feature>
<feature type="region of interest" description="Disordered" evidence="2">
    <location>
        <begin position="445"/>
        <end position="465"/>
    </location>
</feature>
<sequence length="693" mass="77415">MASTTLSDLPDVILSTISSLVSDSRARNSLSLVSHKFLALERSTRSHLTIRGNARDLSLVPDCFRSISHLDLSFLSPWGHTLLASLPIDHQNLLALRLKFCFPFVESLNVYTRSPSSLELLLPQWPRIRHIKLLRWHQRASQIPTGGDFVPIFEHCGGFLESLDLSNFYHWTEDLPPVLLRYADVAARLTRLDLLTASFTEGYKSSEIVSITKSCPNLKTFRVACTFDPRYFEFVGDETLSAVATSSPKLTLLHMVDTASLANPRAIPGTEAGDSAVTAGTLIEVFSGLPNLEELVLDVGKDVKHSGVALEALNSKCKKLRVLKLGQFQGVCSATEWRRLDGVALCGGLQSLSIKNSGDLTDMGLVAIGRGCCKLTTFEIQGCENVTVDGLRTMVSLRSKTLTDVRISCCKNLDTAASLKAIEPICDRIKRLHIDCVWSGSEDEEVEGRVETSEADHEEEDDGYERSQKRCKYSFEEEHCSTSDVNGFCSEDRVWEKLEYLSLWINVGEFLTPLPMTGLDDCPNLEEIRIKIEGDCRGKRRPAEPEFGLSCLALYPKLSKMQLDCGDTIGFALTAPPMQMDLSLWERFFLTGIGSLSLSELDYWPPQDRDVNQRSLSLPGAGLLQECLTLRKLFIHGTAHEHFMNFLLRIPNLRDVQLRADYYPAPENDMSTEMRVGSCSRFEDQLNSRNIID</sequence>
<name>MAX2_ARATH</name>
<reference key="1">
    <citation type="journal article" date="2001" name="Plant Cell">
        <title>ORE9, an F-box protein that regulates leaf senescence in Arabidopsis.</title>
        <authorList>
            <person name="Woo H.R."/>
            <person name="Chung K.M."/>
            <person name="Park J.-H."/>
            <person name="Oh S.A."/>
            <person name="Ahn T."/>
            <person name="Hong S.H."/>
            <person name="Jang S.K."/>
            <person name="Nam H.G."/>
        </authorList>
    </citation>
    <scope>NUCLEOTIDE SEQUENCE [MRNA]</scope>
    <scope>FUNCTION</scope>
    <scope>DOMAIN F-BOX</scope>
    <scope>LEUCINE-RICH REPEATS</scope>
    <scope>INTERACTION WITH SKP1A/ASK1</scope>
</reference>
<reference key="2">
    <citation type="journal article" date="1999" name="Nature">
        <title>Sequence and analysis of chromosome 2 of the plant Arabidopsis thaliana.</title>
        <authorList>
            <person name="Lin X."/>
            <person name="Kaul S."/>
            <person name="Rounsley S.D."/>
            <person name="Shea T.P."/>
            <person name="Benito M.-I."/>
            <person name="Town C.D."/>
            <person name="Fujii C.Y."/>
            <person name="Mason T.M."/>
            <person name="Bowman C.L."/>
            <person name="Barnstead M.E."/>
            <person name="Feldblyum T.V."/>
            <person name="Buell C.R."/>
            <person name="Ketchum K.A."/>
            <person name="Lee J.J."/>
            <person name="Ronning C.M."/>
            <person name="Koo H.L."/>
            <person name="Moffat K.S."/>
            <person name="Cronin L.A."/>
            <person name="Shen M."/>
            <person name="Pai G."/>
            <person name="Van Aken S."/>
            <person name="Umayam L."/>
            <person name="Tallon L.J."/>
            <person name="Gill J.E."/>
            <person name="Adams M.D."/>
            <person name="Carrera A.J."/>
            <person name="Creasy T.H."/>
            <person name="Goodman H.M."/>
            <person name="Somerville C.R."/>
            <person name="Copenhaver G.P."/>
            <person name="Preuss D."/>
            <person name="Nierman W.C."/>
            <person name="White O."/>
            <person name="Eisen J.A."/>
            <person name="Salzberg S.L."/>
            <person name="Fraser C.M."/>
            <person name="Venter J.C."/>
        </authorList>
    </citation>
    <scope>NUCLEOTIDE SEQUENCE [LARGE SCALE GENOMIC DNA]</scope>
    <source>
        <strain>cv. Columbia</strain>
    </source>
</reference>
<reference key="3">
    <citation type="journal article" date="2017" name="Plant J.">
        <title>Araport11: a complete reannotation of the Arabidopsis thaliana reference genome.</title>
        <authorList>
            <person name="Cheng C.Y."/>
            <person name="Krishnakumar V."/>
            <person name="Chan A.P."/>
            <person name="Thibaud-Nissen F."/>
            <person name="Schobel S."/>
            <person name="Town C.D."/>
        </authorList>
    </citation>
    <scope>GENOME REANNOTATION</scope>
    <source>
        <strain>cv. Columbia</strain>
    </source>
</reference>
<reference key="4">
    <citation type="journal article" date="1997" name="Plant J.">
        <title>Identification of three genetic loci controlling leaf senescence in Arabidopsis thaliana.</title>
        <authorList>
            <person name="Oh S.A."/>
            <person name="Park J.-H."/>
            <person name="Lee G.I."/>
            <person name="Paek K.H."/>
            <person name="Park S.K."/>
            <person name="Nam H.G."/>
        </authorList>
    </citation>
    <scope>FUNCTION</scope>
</reference>
<reference key="5">
    <citation type="journal article" date="2000" name="Trends Plant Sci.">
        <title>F-box proteins in Arabidopsis.</title>
        <authorList>
            <person name="Xiao W."/>
            <person name="Jang J.-C."/>
        </authorList>
    </citation>
    <scope>GENE FAMILY</scope>
    <scope>NOMENCLATURE</scope>
</reference>
<reference key="6">
    <citation type="journal article" date="2002" name="Development">
        <title>MAX1 and MAX2 control shoot lateral branching in Arabidopsis.</title>
        <authorList>
            <person name="Stirnberg P."/>
            <person name="van de Sande K."/>
            <person name="Leyser H.M.O."/>
        </authorList>
    </citation>
    <scope>FUNCTION</scope>
</reference>
<reference key="7">
    <citation type="journal article" date="2005" name="Dev. Cell">
        <title>MAX1 encodes a cytochrome P450 family member that acts downstream of MAX3/4 to produce a carotenoid-derived branch-inhibiting hormone.</title>
        <authorList>
            <person name="Booker J."/>
            <person name="Sieberer T."/>
            <person name="Wright W."/>
            <person name="Williamson L."/>
            <person name="Willett B."/>
            <person name="Stirnberg P."/>
            <person name="Turnbull C."/>
            <person name="Srinivasan M."/>
            <person name="Goddard P."/>
            <person name="Leyser O."/>
        </authorList>
    </citation>
    <scope>FUNCTION</scope>
</reference>
<reference key="8">
    <citation type="journal article" date="2006" name="Curr. Biol.">
        <title>The Arabidopsis MAX pathway controls shoot branching by regulating auxin transport.</title>
        <authorList>
            <person name="Bennett T."/>
            <person name="Sieberer T."/>
            <person name="Willett B."/>
            <person name="Booker J."/>
            <person name="Luschnig C."/>
            <person name="Leyser O."/>
        </authorList>
    </citation>
    <scope>FUNCTION</scope>
</reference>
<reference key="9">
    <citation type="journal article" date="2007" name="Plant J.">
        <title>MAX2 participates in an SCF complex which acts locally at the node to suppress shoot branching.</title>
        <authorList>
            <person name="Stirnberg P."/>
            <person name="Furner I.J."/>
            <person name="Ottoline Leyser H.M."/>
        </authorList>
    </citation>
    <scope>FUNCTION</scope>
    <scope>TISSUE SPECIFICITY</scope>
    <scope>SUBCELLULAR LOCATION</scope>
    <scope>DOMAIN F-BOX</scope>
    <scope>INTERACTION WITH SKP1A/ASK1 AND CUL1</scope>
</reference>
<reference key="10">
    <citation type="journal article" date="2012" name="Development">
        <title>Specialisation within the DWARF14 protein family confers distinct responses to karrikins and strigolactones in Arabidopsis.</title>
        <authorList>
            <person name="Waters M.T."/>
            <person name="Nelson D.C."/>
            <person name="Scaffidi A."/>
            <person name="Flematti G.R."/>
            <person name="Sun Y.K."/>
            <person name="Dixon K.W."/>
            <person name="Smith S.M."/>
        </authorList>
    </citation>
    <scope>FUNCTION</scope>
</reference>
<reference key="11">
    <citation type="journal article" date="2014" name="Curr. Opin. Plant Biol.">
        <title>Strigolactone signalling: standing on the shoulders of DWARFs.</title>
        <authorList>
            <person name="Bennett T."/>
            <person name="Leyser O."/>
        </authorList>
    </citation>
    <scope>REVIEW</scope>
</reference>
<reference key="12">
    <citation type="journal article" date="2015" name="Plant Cell">
        <title>Strigolactone signaling in Arabidopsis regulates shoot development by targeting D53-like SMXL repressor proteins for ubiquitination and degradation.</title>
        <authorList>
            <person name="Wang L."/>
            <person name="Wang B."/>
            <person name="Jiang L."/>
            <person name="Liu X."/>
            <person name="Li X."/>
            <person name="Lu Z."/>
            <person name="Meng X."/>
            <person name="Wang Y."/>
            <person name="Smith S.M."/>
            <person name="Li J."/>
        </authorList>
    </citation>
    <scope>INTERACTION WITH SMXL6; SMXL7 AND SMXL8</scope>
</reference>
<reference key="13">
    <citation type="journal article" date="2016" name="J. Exp. Bot.">
        <title>Mitogen-activated protein kinase 6 mediates nuclear translocation of ORE3 to promote ORE9 gene expression in methyl jasmonate-induced leaf senescence.</title>
        <authorList>
            <person name="Zhang Y."/>
            <person name="Liu J."/>
            <person name="Chai J."/>
            <person name="Xing D."/>
        </authorList>
    </citation>
    <scope>FUNCTION</scope>
    <scope>INDUCTION BY EIN3</scope>
</reference>
<reference key="14">
    <citation type="journal article" date="2016" name="Nature">
        <title>DWARF14 is a non-canonical hormone receptor for strigolactone.</title>
        <authorList>
            <person name="Yao R."/>
            <person name="Ming Z."/>
            <person name="Yan L."/>
            <person name="Li S."/>
            <person name="Wang F."/>
            <person name="Ma S."/>
            <person name="Yu C."/>
            <person name="Yang M."/>
            <person name="Chen L."/>
            <person name="Chen L."/>
            <person name="Li Y."/>
            <person name="Yan C."/>
            <person name="Miao D."/>
            <person name="Sun Z."/>
            <person name="Yan J."/>
            <person name="Sun Y."/>
            <person name="Wang L."/>
            <person name="Chu J."/>
            <person name="Fan S."/>
            <person name="He W."/>
            <person name="Deng H."/>
            <person name="Nan F."/>
            <person name="Li J."/>
            <person name="Rao Z."/>
            <person name="Lou Z."/>
            <person name="Xie D."/>
        </authorList>
    </citation>
    <scope>SUBUNIT</scope>
    <scope>INTERACTION WITH D14</scope>
</reference>
<reference key="15">
    <citation type="journal article" date="2019" name="PLoS Genet.">
        <title>Connective auxin transport contributes to strigolactone-mediated shoot branching control independent of the transcription factor BRC1.</title>
        <authorList>
            <person name="van Rongen M."/>
            <person name="Bennett T."/>
            <person name="Ticchiarelli F."/>
            <person name="Leyser O."/>
        </authorList>
    </citation>
    <scope>FUNCTION</scope>
    <scope>DISRUPTION PHENOTYPE</scope>
    <source>
        <strain>cv. Columbia</strain>
    </source>
</reference>